<name>BFR_MYCPA</name>
<gene>
    <name type="primary">bfr</name>
    <name type="synonym">bfrA</name>
    <name type="ordered locus">MAP_1595</name>
</gene>
<evidence type="ECO:0000250" key="1"/>
<evidence type="ECO:0000250" key="2">
    <source>
        <dbReference type="UniProtKB" id="Q9HWF9"/>
    </source>
</evidence>
<evidence type="ECO:0000255" key="3">
    <source>
        <dbReference type="PROSITE-ProRule" id="PRU00085"/>
    </source>
</evidence>
<evidence type="ECO:0000305" key="4"/>
<organism>
    <name type="scientific">Mycolicibacterium paratuberculosis (strain ATCC BAA-968 / K-10)</name>
    <name type="common">Mycobacterium paratuberculosis</name>
    <dbReference type="NCBI Taxonomy" id="262316"/>
    <lineage>
        <taxon>Bacteria</taxon>
        <taxon>Bacillati</taxon>
        <taxon>Actinomycetota</taxon>
        <taxon>Actinomycetes</taxon>
        <taxon>Mycobacteriales</taxon>
        <taxon>Mycobacteriaceae</taxon>
        <taxon>Mycobacterium</taxon>
        <taxon>Mycobacterium avium complex (MAC)</taxon>
    </lineage>
</organism>
<protein>
    <recommendedName>
        <fullName>Bacterioferritin</fullName>
        <shortName>BFR</shortName>
        <ecNumber>1.16.3.1</ecNumber>
    </recommendedName>
    <alternativeName>
        <fullName>Antigen D</fullName>
    </alternativeName>
</protein>
<dbReference type="EC" id="1.16.3.1"/>
<dbReference type="EMBL" id="AE016958">
    <property type="protein sequence ID" value="AAS03912.1"/>
    <property type="molecule type" value="Genomic_DNA"/>
</dbReference>
<dbReference type="PIR" id="A44893">
    <property type="entry name" value="A44893"/>
</dbReference>
<dbReference type="RefSeq" id="WP_003876561.1">
    <property type="nucleotide sequence ID" value="NZ_CP106873.1"/>
</dbReference>
<dbReference type="SMR" id="P45430"/>
<dbReference type="STRING" id="262316.MAP_1595"/>
<dbReference type="GeneID" id="75270206"/>
<dbReference type="KEGG" id="mpa:MAP_1595"/>
<dbReference type="eggNOG" id="COG2193">
    <property type="taxonomic scope" value="Bacteria"/>
</dbReference>
<dbReference type="HOGENOM" id="CLU_104506_2_0_11"/>
<dbReference type="Proteomes" id="UP000000580">
    <property type="component" value="Chromosome"/>
</dbReference>
<dbReference type="GO" id="GO:0005829">
    <property type="term" value="C:cytosol"/>
    <property type="evidence" value="ECO:0007669"/>
    <property type="project" value="TreeGrafter"/>
</dbReference>
<dbReference type="GO" id="GO:0008199">
    <property type="term" value="F:ferric iron binding"/>
    <property type="evidence" value="ECO:0007669"/>
    <property type="project" value="InterPro"/>
</dbReference>
<dbReference type="GO" id="GO:0004322">
    <property type="term" value="F:ferroxidase activity"/>
    <property type="evidence" value="ECO:0007669"/>
    <property type="project" value="UniProtKB-EC"/>
</dbReference>
<dbReference type="GO" id="GO:0020037">
    <property type="term" value="F:heme binding"/>
    <property type="evidence" value="ECO:0007669"/>
    <property type="project" value="TreeGrafter"/>
</dbReference>
<dbReference type="GO" id="GO:0006879">
    <property type="term" value="P:intracellular iron ion homeostasis"/>
    <property type="evidence" value="ECO:0007669"/>
    <property type="project" value="UniProtKB-KW"/>
</dbReference>
<dbReference type="GO" id="GO:0006826">
    <property type="term" value="P:iron ion transport"/>
    <property type="evidence" value="ECO:0007669"/>
    <property type="project" value="InterPro"/>
</dbReference>
<dbReference type="CDD" id="cd00907">
    <property type="entry name" value="Bacterioferritin"/>
    <property type="match status" value="1"/>
</dbReference>
<dbReference type="FunFam" id="1.20.1260.10:FF:000005">
    <property type="entry name" value="Bacterioferritin"/>
    <property type="match status" value="1"/>
</dbReference>
<dbReference type="Gene3D" id="1.20.1260.10">
    <property type="match status" value="1"/>
</dbReference>
<dbReference type="InterPro" id="IPR002024">
    <property type="entry name" value="Bacterioferritin"/>
</dbReference>
<dbReference type="InterPro" id="IPR012347">
    <property type="entry name" value="Ferritin-like"/>
</dbReference>
<dbReference type="InterPro" id="IPR009040">
    <property type="entry name" value="Ferritin-like_diiron"/>
</dbReference>
<dbReference type="InterPro" id="IPR009078">
    <property type="entry name" value="Ferritin-like_SF"/>
</dbReference>
<dbReference type="InterPro" id="IPR008331">
    <property type="entry name" value="Ferritin_DPS_dom"/>
</dbReference>
<dbReference type="NCBIfam" id="TIGR00754">
    <property type="entry name" value="bfr"/>
    <property type="match status" value="1"/>
</dbReference>
<dbReference type="PANTHER" id="PTHR30295">
    <property type="entry name" value="BACTERIOFERRITIN"/>
    <property type="match status" value="1"/>
</dbReference>
<dbReference type="PANTHER" id="PTHR30295:SF0">
    <property type="entry name" value="BACTERIOFERRITIN"/>
    <property type="match status" value="1"/>
</dbReference>
<dbReference type="Pfam" id="PF00210">
    <property type="entry name" value="Ferritin"/>
    <property type="match status" value="1"/>
</dbReference>
<dbReference type="PIRSF" id="PIRSF002560">
    <property type="entry name" value="Bacterioferritin"/>
    <property type="match status" value="1"/>
</dbReference>
<dbReference type="PRINTS" id="PR00601">
    <property type="entry name" value="BACFERRITIN"/>
</dbReference>
<dbReference type="SUPFAM" id="SSF47240">
    <property type="entry name" value="Ferritin-like"/>
    <property type="match status" value="1"/>
</dbReference>
<dbReference type="PROSITE" id="PS00549">
    <property type="entry name" value="BACTERIOFERRITIN"/>
    <property type="match status" value="1"/>
</dbReference>
<dbReference type="PROSITE" id="PS50905">
    <property type="entry name" value="FERRITIN_LIKE"/>
    <property type="match status" value="1"/>
</dbReference>
<feature type="chain" id="PRO_0000192602" description="Bacterioferritin">
    <location>
        <begin position="1"/>
        <end position="159"/>
    </location>
</feature>
<feature type="domain" description="Ferritin-like diiron" evidence="3">
    <location>
        <begin position="1"/>
        <end position="145"/>
    </location>
</feature>
<feature type="binding site" evidence="3">
    <location>
        <position position="18"/>
    </location>
    <ligand>
        <name>Fe cation</name>
        <dbReference type="ChEBI" id="CHEBI:24875"/>
        <label>1</label>
    </ligand>
</feature>
<feature type="binding site" evidence="3">
    <location>
        <position position="51"/>
    </location>
    <ligand>
        <name>Fe cation</name>
        <dbReference type="ChEBI" id="CHEBI:24875"/>
        <label>1</label>
    </ligand>
</feature>
<feature type="binding site" evidence="3">
    <location>
        <position position="51"/>
    </location>
    <ligand>
        <name>Fe cation</name>
        <dbReference type="ChEBI" id="CHEBI:24875"/>
        <label>2</label>
    </ligand>
</feature>
<feature type="binding site" description="axial binding residue" evidence="3">
    <location>
        <position position="52"/>
    </location>
    <ligand>
        <name>heme b</name>
        <dbReference type="ChEBI" id="CHEBI:60344"/>
        <note>ligand shared between dimeric partners</note>
    </ligand>
    <ligandPart>
        <name>Fe</name>
        <dbReference type="ChEBI" id="CHEBI:18248"/>
    </ligandPart>
</feature>
<feature type="binding site" evidence="3">
    <location>
        <position position="54"/>
    </location>
    <ligand>
        <name>Fe cation</name>
        <dbReference type="ChEBI" id="CHEBI:24875"/>
        <label>1</label>
    </ligand>
</feature>
<feature type="binding site" evidence="3">
    <location>
        <position position="94"/>
    </location>
    <ligand>
        <name>Fe cation</name>
        <dbReference type="ChEBI" id="CHEBI:24875"/>
        <label>2</label>
    </ligand>
</feature>
<feature type="binding site" evidence="3">
    <location>
        <position position="127"/>
    </location>
    <ligand>
        <name>Fe cation</name>
        <dbReference type="ChEBI" id="CHEBI:24875"/>
        <label>1</label>
    </ligand>
</feature>
<feature type="binding site" evidence="3">
    <location>
        <position position="127"/>
    </location>
    <ligand>
        <name>Fe cation</name>
        <dbReference type="ChEBI" id="CHEBI:24875"/>
        <label>2</label>
    </ligand>
</feature>
<feature type="binding site" evidence="3">
    <location>
        <position position="130"/>
    </location>
    <ligand>
        <name>Fe cation</name>
        <dbReference type="ChEBI" id="CHEBI:24875"/>
        <label>2</label>
    </ligand>
</feature>
<proteinExistence type="evidence at protein level"/>
<accession>P45430</accession>
<sequence length="159" mass="18479">MQGDPEVLRLLNEQLTSELTAINQYFLHSKMQDNWGFTELAEHTRAESFDEMRHAEAITDRILLLDGLPNYQRLFSLRIGQTLREQFEADLAIEYEVMDRLKPAIILCREKQDSTTATLFEQIVADEEKHIDYLETQLELMDKLGVELYSAQCVSRPPS</sequence>
<comment type="function">
    <text evidence="1">Iron-storage protein, whose ferroxidase center binds Fe(2+), oxidizes it using dioxygen to Fe(3+), and participates in the subsequent Fe(3+) oxide mineral core formation within the central cavity of the BFR protein shell.</text>
</comment>
<comment type="catalytic activity">
    <reaction>
        <text>4 Fe(2+) + O2 + 4 H(+) = 4 Fe(3+) + 2 H2O</text>
        <dbReference type="Rhea" id="RHEA:11148"/>
        <dbReference type="ChEBI" id="CHEBI:15377"/>
        <dbReference type="ChEBI" id="CHEBI:15378"/>
        <dbReference type="ChEBI" id="CHEBI:15379"/>
        <dbReference type="ChEBI" id="CHEBI:29033"/>
        <dbReference type="ChEBI" id="CHEBI:29034"/>
        <dbReference type="EC" id="1.16.3.1"/>
    </reaction>
</comment>
<comment type="catalytic activity">
    <reaction evidence="2">
        <text>Fe(2+)(in) = Fe(2+)(out)</text>
        <dbReference type="Rhea" id="RHEA:28486"/>
        <dbReference type="ChEBI" id="CHEBI:29033"/>
    </reaction>
</comment>
<comment type="cofactor">
    <cofactor evidence="1">
        <name>heme b</name>
        <dbReference type="ChEBI" id="CHEBI:60344"/>
    </cofactor>
    <text evidence="1">Binds 1 heme b (iron(II)-protoporphyrin IX) group per dimer.</text>
</comment>
<comment type="subunit">
    <text evidence="1">Homooligomer of 24 subunits, arranged as 12 dimers, that are packed together to form an approximately spherical molecule with a central cavity, in which large amounts of iron can be deposited.</text>
</comment>
<comment type="similarity">
    <text evidence="4">Belongs to the bacterioferritin family.</text>
</comment>
<keyword id="KW-0903">Direct protein sequencing</keyword>
<keyword id="KW-0349">Heme</keyword>
<keyword id="KW-0408">Iron</keyword>
<keyword id="KW-0409">Iron storage</keyword>
<keyword id="KW-0479">Metal-binding</keyword>
<keyword id="KW-0560">Oxidoreductase</keyword>
<keyword id="KW-1185">Reference proteome</keyword>
<reference key="1">
    <citation type="journal article" date="2005" name="Proc. Natl. Acad. Sci. U.S.A.">
        <title>The complete genome sequence of Mycobacterium avium subspecies paratuberculosis.</title>
        <authorList>
            <person name="Li L."/>
            <person name="Bannantine J.P."/>
            <person name="Zhang Q."/>
            <person name="Amonsin A."/>
            <person name="May B.J."/>
            <person name="Alt D."/>
            <person name="Banerji N."/>
            <person name="Kanjilal S."/>
            <person name="Kapur V."/>
        </authorList>
    </citation>
    <scope>NUCLEOTIDE SEQUENCE [LARGE SCALE GENOMIC DNA]</scope>
    <source>
        <strain>ATCC BAA-968 / K-10</strain>
    </source>
</reference>
<reference key="2">
    <citation type="journal article" date="1991" name="J. Clin. Microbiol.">
        <title>Mycobacterium paratuberculosis antigen D: characterization and evidence that it is a bacterioferritin.</title>
        <authorList>
            <person name="Brooks B.W."/>
            <person name="Young N.M."/>
            <person name="Watson D.C."/>
            <person name="Robertson R.H."/>
            <person name="Sugden E.A."/>
            <person name="Nielsen K.H."/>
            <person name="Becker S.A."/>
        </authorList>
    </citation>
    <scope>PROTEIN SEQUENCE OF 1-42</scope>
    <source>
        <strain>C-286</strain>
    </source>
</reference>